<organism>
    <name type="scientific">Saccharolobus islandicus (strain L.S.2.15 / Lassen #1)</name>
    <name type="common">Sulfolobus islandicus</name>
    <dbReference type="NCBI Taxonomy" id="429572"/>
    <lineage>
        <taxon>Archaea</taxon>
        <taxon>Thermoproteota</taxon>
        <taxon>Thermoprotei</taxon>
        <taxon>Sulfolobales</taxon>
        <taxon>Sulfolobaceae</taxon>
        <taxon>Saccharolobus</taxon>
    </lineage>
</organism>
<accession>C3MJ22</accession>
<dbReference type="EC" id="5.4.3.8" evidence="1"/>
<dbReference type="EMBL" id="CP001399">
    <property type="protein sequence ID" value="ACP36109.1"/>
    <property type="molecule type" value="Genomic_DNA"/>
</dbReference>
<dbReference type="RefSeq" id="WP_012714102.1">
    <property type="nucleotide sequence ID" value="NC_012589.1"/>
</dbReference>
<dbReference type="SMR" id="C3MJ22"/>
<dbReference type="GeneID" id="84062267"/>
<dbReference type="KEGG" id="sis:LS215_2116"/>
<dbReference type="HOGENOM" id="CLU_016922_1_5_2"/>
<dbReference type="OrthoDB" id="6524at2157"/>
<dbReference type="UniPathway" id="UPA00251">
    <property type="reaction ID" value="UER00317"/>
</dbReference>
<dbReference type="Proteomes" id="UP000001747">
    <property type="component" value="Chromosome"/>
</dbReference>
<dbReference type="GO" id="GO:0005737">
    <property type="term" value="C:cytoplasm"/>
    <property type="evidence" value="ECO:0007669"/>
    <property type="project" value="UniProtKB-SubCell"/>
</dbReference>
<dbReference type="GO" id="GO:0042286">
    <property type="term" value="F:glutamate-1-semialdehyde 2,1-aminomutase activity"/>
    <property type="evidence" value="ECO:0007669"/>
    <property type="project" value="UniProtKB-UniRule"/>
</dbReference>
<dbReference type="GO" id="GO:0030170">
    <property type="term" value="F:pyridoxal phosphate binding"/>
    <property type="evidence" value="ECO:0007669"/>
    <property type="project" value="InterPro"/>
</dbReference>
<dbReference type="GO" id="GO:0008483">
    <property type="term" value="F:transaminase activity"/>
    <property type="evidence" value="ECO:0007669"/>
    <property type="project" value="InterPro"/>
</dbReference>
<dbReference type="GO" id="GO:0006782">
    <property type="term" value="P:protoporphyrinogen IX biosynthetic process"/>
    <property type="evidence" value="ECO:0007669"/>
    <property type="project" value="UniProtKB-UniRule"/>
</dbReference>
<dbReference type="CDD" id="cd00610">
    <property type="entry name" value="OAT_like"/>
    <property type="match status" value="1"/>
</dbReference>
<dbReference type="FunFam" id="3.40.640.10:FF:000021">
    <property type="entry name" value="Glutamate-1-semialdehyde 2,1-aminomutase"/>
    <property type="match status" value="1"/>
</dbReference>
<dbReference type="Gene3D" id="3.90.1150.10">
    <property type="entry name" value="Aspartate Aminotransferase, domain 1"/>
    <property type="match status" value="1"/>
</dbReference>
<dbReference type="Gene3D" id="3.40.640.10">
    <property type="entry name" value="Type I PLP-dependent aspartate aminotransferase-like (Major domain)"/>
    <property type="match status" value="1"/>
</dbReference>
<dbReference type="HAMAP" id="MF_00375">
    <property type="entry name" value="HemL_aminotrans_3"/>
    <property type="match status" value="1"/>
</dbReference>
<dbReference type="InterPro" id="IPR004639">
    <property type="entry name" value="4pyrrol_synth_GluAld_NH2Trfase"/>
</dbReference>
<dbReference type="InterPro" id="IPR005814">
    <property type="entry name" value="Aminotrans_3"/>
</dbReference>
<dbReference type="InterPro" id="IPR049704">
    <property type="entry name" value="Aminotrans_3_PPA_site"/>
</dbReference>
<dbReference type="InterPro" id="IPR015424">
    <property type="entry name" value="PyrdxlP-dep_Trfase"/>
</dbReference>
<dbReference type="InterPro" id="IPR015421">
    <property type="entry name" value="PyrdxlP-dep_Trfase_major"/>
</dbReference>
<dbReference type="InterPro" id="IPR015422">
    <property type="entry name" value="PyrdxlP-dep_Trfase_small"/>
</dbReference>
<dbReference type="NCBIfam" id="TIGR00713">
    <property type="entry name" value="hemL"/>
    <property type="match status" value="1"/>
</dbReference>
<dbReference type="NCBIfam" id="NF000818">
    <property type="entry name" value="PRK00062.1"/>
    <property type="match status" value="1"/>
</dbReference>
<dbReference type="PANTHER" id="PTHR43713">
    <property type="entry name" value="GLUTAMATE-1-SEMIALDEHYDE 2,1-AMINOMUTASE"/>
    <property type="match status" value="1"/>
</dbReference>
<dbReference type="PANTHER" id="PTHR43713:SF3">
    <property type="entry name" value="GLUTAMATE-1-SEMIALDEHYDE 2,1-AMINOMUTASE 1, CHLOROPLASTIC-RELATED"/>
    <property type="match status" value="1"/>
</dbReference>
<dbReference type="Pfam" id="PF00202">
    <property type="entry name" value="Aminotran_3"/>
    <property type="match status" value="1"/>
</dbReference>
<dbReference type="SUPFAM" id="SSF53383">
    <property type="entry name" value="PLP-dependent transferases"/>
    <property type="match status" value="1"/>
</dbReference>
<dbReference type="PROSITE" id="PS00600">
    <property type="entry name" value="AA_TRANSFER_CLASS_3"/>
    <property type="match status" value="1"/>
</dbReference>
<sequence>MDKGRCTILNSEELWAQARQLFAGGVNSPVRAAVKPFPFYVERGKGAYIYTVEGNKFIDYVLGYGPLILGHSPESVKRKIIEQLEKGWLFGTPSKLEIELAKKISSHIPSAQKIRFVNSGTEATMAAIRLARGYSKRSKILKFSGNYHGAHDYTLVEAGSAATEYNVTTSDGIPMEIMKTVEICEFNDLDCVDKKLRNEDIAAALLEPIMGNAGVILPEKGFLSGLRELTKSYNSLLIFDEVITGFRIDIGGAQSYYQIYPDITTLGKIIGGGFPIGAVAGKAEIIDNFTPAGRVFNAGTFNANPISMIAGIATIEELEKEYPYNIANKASKTLVEELERLLKIKHTINHIGSMFQVFFGIDKVRNYSDAKRANKEYYIKFHERLLKERVFIPPSQYETIFTSAAHEDDVVNDTIDKLAKVIGELS</sequence>
<comment type="catalytic activity">
    <reaction evidence="1">
        <text>(S)-4-amino-5-oxopentanoate = 5-aminolevulinate</text>
        <dbReference type="Rhea" id="RHEA:14265"/>
        <dbReference type="ChEBI" id="CHEBI:57501"/>
        <dbReference type="ChEBI" id="CHEBI:356416"/>
        <dbReference type="EC" id="5.4.3.8"/>
    </reaction>
</comment>
<comment type="cofactor">
    <cofactor evidence="1">
        <name>pyridoxal 5'-phosphate</name>
        <dbReference type="ChEBI" id="CHEBI:597326"/>
    </cofactor>
</comment>
<comment type="pathway">
    <text evidence="1">Porphyrin-containing compound metabolism; protoporphyrin-IX biosynthesis; 5-aminolevulinate from L-glutamyl-tRNA(Glu): step 2/2.</text>
</comment>
<comment type="subcellular location">
    <subcellularLocation>
        <location evidence="1">Cytoplasm</location>
    </subcellularLocation>
</comment>
<comment type="similarity">
    <text evidence="1">Belongs to the class-III pyridoxal-phosphate-dependent aminotransferase family. HemL subfamily.</text>
</comment>
<reference key="1">
    <citation type="journal article" date="2009" name="Proc. Natl. Acad. Sci. U.S.A.">
        <title>Biogeography of the Sulfolobus islandicus pan-genome.</title>
        <authorList>
            <person name="Reno M.L."/>
            <person name="Held N.L."/>
            <person name="Fields C.J."/>
            <person name="Burke P.V."/>
            <person name="Whitaker R.J."/>
        </authorList>
    </citation>
    <scope>NUCLEOTIDE SEQUENCE [LARGE SCALE GENOMIC DNA]</scope>
    <source>
        <strain>L.S.2.15 / Lassen #1</strain>
    </source>
</reference>
<protein>
    <recommendedName>
        <fullName evidence="1">Glutamate-1-semialdehyde 2,1-aminomutase</fullName>
        <shortName evidence="1">GSA</shortName>
        <ecNumber evidence="1">5.4.3.8</ecNumber>
    </recommendedName>
    <alternativeName>
        <fullName evidence="1">Glutamate-1-semialdehyde aminotransferase</fullName>
        <shortName evidence="1">GSA-AT</shortName>
    </alternativeName>
</protein>
<keyword id="KW-0963">Cytoplasm</keyword>
<keyword id="KW-0413">Isomerase</keyword>
<keyword id="KW-0627">Porphyrin biosynthesis</keyword>
<keyword id="KW-0663">Pyridoxal phosphate</keyword>
<feature type="chain" id="PRO_0000382413" description="Glutamate-1-semialdehyde 2,1-aminomutase">
    <location>
        <begin position="1"/>
        <end position="426"/>
    </location>
</feature>
<feature type="modified residue" description="N6-(pyridoxal phosphate)lysine" evidence="1">
    <location>
        <position position="268"/>
    </location>
</feature>
<name>GSA_SACI2</name>
<evidence type="ECO:0000255" key="1">
    <source>
        <dbReference type="HAMAP-Rule" id="MF_00375"/>
    </source>
</evidence>
<gene>
    <name evidence="1" type="primary">hemL</name>
    <name type="ordered locus">LS215_2116</name>
</gene>
<proteinExistence type="inferred from homology"/>